<dbReference type="EC" id="3.6.1.9" evidence="1"/>
<dbReference type="EMBL" id="AE001439">
    <property type="protein sequence ID" value="AAD06737.1"/>
    <property type="molecule type" value="Genomic_DNA"/>
</dbReference>
<dbReference type="PIR" id="E71842">
    <property type="entry name" value="E71842"/>
</dbReference>
<dbReference type="RefSeq" id="WP_000420258.1">
    <property type="nucleotide sequence ID" value="NC_000921.1"/>
</dbReference>
<dbReference type="SMR" id="Q9ZJY6"/>
<dbReference type="KEGG" id="hpj:jhp_1161"/>
<dbReference type="PATRIC" id="fig|85963.30.peg.1413"/>
<dbReference type="eggNOG" id="COG0424">
    <property type="taxonomic scope" value="Bacteria"/>
</dbReference>
<dbReference type="Proteomes" id="UP000000804">
    <property type="component" value="Chromosome"/>
</dbReference>
<dbReference type="GO" id="GO:0005737">
    <property type="term" value="C:cytoplasm"/>
    <property type="evidence" value="ECO:0007669"/>
    <property type="project" value="UniProtKB-SubCell"/>
</dbReference>
<dbReference type="GO" id="GO:0047429">
    <property type="term" value="F:nucleoside triphosphate diphosphatase activity"/>
    <property type="evidence" value="ECO:0007669"/>
    <property type="project" value="UniProtKB-EC"/>
</dbReference>
<dbReference type="GO" id="GO:0009117">
    <property type="term" value="P:nucleotide metabolic process"/>
    <property type="evidence" value="ECO:0007669"/>
    <property type="project" value="UniProtKB-KW"/>
</dbReference>
<dbReference type="FunFam" id="3.90.950.10:FF:000013">
    <property type="entry name" value="Nucleoside triphosphate pyrophosphatase"/>
    <property type="match status" value="1"/>
</dbReference>
<dbReference type="Gene3D" id="3.90.950.10">
    <property type="match status" value="1"/>
</dbReference>
<dbReference type="HAMAP" id="MF_00528">
    <property type="entry name" value="Maf"/>
    <property type="match status" value="1"/>
</dbReference>
<dbReference type="InterPro" id="IPR029001">
    <property type="entry name" value="ITPase-like_fam"/>
</dbReference>
<dbReference type="InterPro" id="IPR003697">
    <property type="entry name" value="Maf-like"/>
</dbReference>
<dbReference type="NCBIfam" id="TIGR00172">
    <property type="entry name" value="maf"/>
    <property type="match status" value="1"/>
</dbReference>
<dbReference type="NCBIfam" id="NF003141">
    <property type="entry name" value="PRK04056.1"/>
    <property type="match status" value="1"/>
</dbReference>
<dbReference type="PANTHER" id="PTHR43213">
    <property type="entry name" value="BIFUNCTIONAL DTTP/UTP PYROPHOSPHATASE/METHYLTRANSFERASE PROTEIN-RELATED"/>
    <property type="match status" value="1"/>
</dbReference>
<dbReference type="PANTHER" id="PTHR43213:SF5">
    <property type="entry name" value="BIFUNCTIONAL DTTP_UTP PYROPHOSPHATASE_METHYLTRANSFERASE PROTEIN-RELATED"/>
    <property type="match status" value="1"/>
</dbReference>
<dbReference type="Pfam" id="PF02545">
    <property type="entry name" value="Maf"/>
    <property type="match status" value="1"/>
</dbReference>
<dbReference type="PIRSF" id="PIRSF006305">
    <property type="entry name" value="Maf"/>
    <property type="match status" value="1"/>
</dbReference>
<dbReference type="SUPFAM" id="SSF52972">
    <property type="entry name" value="ITPase-like"/>
    <property type="match status" value="1"/>
</dbReference>
<sequence length="190" mass="21121">MELILGSQSSARANLLKEHGIKFEQKALYFDEESLKTTDPREFVYLACKGKLEKAKELLANNCAIVVADSVVSVGNRMQRKAKNKREALEFLKRQNGNEIEVLTCSALISPVLEWLDLSVFRARLKAFDCSEIEKYLESGLWQGSAGCVRLEDFHKPYIKSSSKNLSVGLGLNVEGLLGALKLGVKLSLL</sequence>
<reference key="1">
    <citation type="journal article" date="1999" name="Nature">
        <title>Genomic sequence comparison of two unrelated isolates of the human gastric pathogen Helicobacter pylori.</title>
        <authorList>
            <person name="Alm R.A."/>
            <person name="Ling L.-S.L."/>
            <person name="Moir D.T."/>
            <person name="King B.L."/>
            <person name="Brown E.D."/>
            <person name="Doig P.C."/>
            <person name="Smith D.R."/>
            <person name="Noonan B."/>
            <person name="Guild B.C."/>
            <person name="deJonge B.L."/>
            <person name="Carmel G."/>
            <person name="Tummino P.J."/>
            <person name="Caruso A."/>
            <person name="Uria-Nickelsen M."/>
            <person name="Mills D.M."/>
            <person name="Ives C."/>
            <person name="Gibson R."/>
            <person name="Merberg D."/>
            <person name="Mills S.D."/>
            <person name="Jiang Q."/>
            <person name="Taylor D.E."/>
            <person name="Vovis G.F."/>
            <person name="Trust T.J."/>
        </authorList>
    </citation>
    <scope>NUCLEOTIDE SEQUENCE [LARGE SCALE GENOMIC DNA]</scope>
    <source>
        <strain>J99 / ATCC 700824</strain>
    </source>
</reference>
<feature type="chain" id="PRO_0000123025" description="Nucleoside triphosphate pyrophosphatase">
    <location>
        <begin position="1"/>
        <end position="190"/>
    </location>
</feature>
<feature type="active site" description="Proton acceptor" evidence="1">
    <location>
        <position position="69"/>
    </location>
</feature>
<comment type="function">
    <text evidence="1">Nucleoside triphosphate pyrophosphatase. May have a dual role in cell division arrest and in preventing the incorporation of modified nucleotides into cellular nucleic acids.</text>
</comment>
<comment type="catalytic activity">
    <reaction evidence="1">
        <text>a ribonucleoside 5'-triphosphate + H2O = a ribonucleoside 5'-phosphate + diphosphate + H(+)</text>
        <dbReference type="Rhea" id="RHEA:23996"/>
        <dbReference type="ChEBI" id="CHEBI:15377"/>
        <dbReference type="ChEBI" id="CHEBI:15378"/>
        <dbReference type="ChEBI" id="CHEBI:33019"/>
        <dbReference type="ChEBI" id="CHEBI:58043"/>
        <dbReference type="ChEBI" id="CHEBI:61557"/>
        <dbReference type="EC" id="3.6.1.9"/>
    </reaction>
</comment>
<comment type="catalytic activity">
    <reaction evidence="1">
        <text>a 2'-deoxyribonucleoside 5'-triphosphate + H2O = a 2'-deoxyribonucleoside 5'-phosphate + diphosphate + H(+)</text>
        <dbReference type="Rhea" id="RHEA:44644"/>
        <dbReference type="ChEBI" id="CHEBI:15377"/>
        <dbReference type="ChEBI" id="CHEBI:15378"/>
        <dbReference type="ChEBI" id="CHEBI:33019"/>
        <dbReference type="ChEBI" id="CHEBI:61560"/>
        <dbReference type="ChEBI" id="CHEBI:65317"/>
        <dbReference type="EC" id="3.6.1.9"/>
    </reaction>
</comment>
<comment type="cofactor">
    <cofactor evidence="1">
        <name>a divalent metal cation</name>
        <dbReference type="ChEBI" id="CHEBI:60240"/>
    </cofactor>
</comment>
<comment type="subcellular location">
    <subcellularLocation>
        <location evidence="1">Cytoplasm</location>
    </subcellularLocation>
</comment>
<comment type="similarity">
    <text evidence="1">Belongs to the Maf family.</text>
</comment>
<accession>Q9ZJY6</accession>
<name>NTPP_HELPJ</name>
<evidence type="ECO:0000255" key="1">
    <source>
        <dbReference type="HAMAP-Rule" id="MF_00528"/>
    </source>
</evidence>
<organism>
    <name type="scientific">Helicobacter pylori (strain J99 / ATCC 700824)</name>
    <name type="common">Campylobacter pylori J99</name>
    <dbReference type="NCBI Taxonomy" id="85963"/>
    <lineage>
        <taxon>Bacteria</taxon>
        <taxon>Pseudomonadati</taxon>
        <taxon>Campylobacterota</taxon>
        <taxon>Epsilonproteobacteria</taxon>
        <taxon>Campylobacterales</taxon>
        <taxon>Helicobacteraceae</taxon>
        <taxon>Helicobacter</taxon>
    </lineage>
</organism>
<protein>
    <recommendedName>
        <fullName evidence="1">Nucleoside triphosphate pyrophosphatase</fullName>
        <ecNumber evidence="1">3.6.1.9</ecNumber>
    </recommendedName>
    <alternativeName>
        <fullName evidence="1">Nucleotide pyrophosphatase</fullName>
        <shortName evidence="1">Nucleotide PPase</shortName>
    </alternativeName>
</protein>
<keyword id="KW-0963">Cytoplasm</keyword>
<keyword id="KW-0378">Hydrolase</keyword>
<keyword id="KW-0546">Nucleotide metabolism</keyword>
<gene>
    <name type="ordered locus">jhp_1161</name>
</gene>
<proteinExistence type="inferred from homology"/>